<protein>
    <recommendedName>
        <fullName>Protein YIPF1</fullName>
    </recommendedName>
    <alternativeName>
        <fullName>YIP1 family member 1</fullName>
    </alternativeName>
</protein>
<name>YIPF1_HUMAN</name>
<evidence type="ECO:0000255" key="1"/>
<evidence type="ECO:0000256" key="2">
    <source>
        <dbReference type="SAM" id="MobiDB-lite"/>
    </source>
</evidence>
<evidence type="ECO:0000269" key="3">
    <source>
    </source>
</evidence>
<evidence type="ECO:0000269" key="4">
    <source>
    </source>
</evidence>
<evidence type="ECO:0000303" key="5">
    <source>
    </source>
</evidence>
<evidence type="ECO:0000305" key="6"/>
<evidence type="ECO:0000305" key="7">
    <source>
    </source>
</evidence>
<accession>Q9Y548</accession>
<accession>B2RCM7</accession>
<accession>D3DQ40</accession>
<accession>Q9NWJ1</accession>
<comment type="subunit">
    <text evidence="4">Interacts with YIPF6; this interaction may stabilize YIPF1. May also form a ternary complex with YIPF2 and YIPF6.</text>
</comment>
<comment type="interaction">
    <interactant intactId="EBI-7850136">
        <id>Q9Y548</id>
    </interactant>
    <interactant intactId="EBI-12904424">
        <id>Q8NCL9</id>
        <label>APCDD1L</label>
    </interactant>
    <organismsDiffer>false</organismsDiffer>
    <experiments>3</experiments>
</comment>
<comment type="interaction">
    <interactant intactId="EBI-7850136">
        <id>Q9Y548</id>
    </interactant>
    <interactant intactId="EBI-13059134">
        <id>Q13520</id>
        <label>AQP6</label>
    </interactant>
    <organismsDiffer>false</organismsDiffer>
    <experiments>3</experiments>
</comment>
<comment type="interaction">
    <interactant intactId="EBI-7850136">
        <id>Q9Y548</id>
    </interactant>
    <interactant intactId="EBI-12808270">
        <id>P07307-3</id>
        <label>ASGR2</label>
    </interactant>
    <organismsDiffer>false</organismsDiffer>
    <experiments>3</experiments>
</comment>
<comment type="interaction">
    <interactant intactId="EBI-7850136">
        <id>Q9Y548</id>
    </interactant>
    <interactant intactId="EBI-18400628">
        <id>O00501</id>
        <label>CLDN5</label>
    </interactant>
    <organismsDiffer>false</organismsDiffer>
    <experiments>3</experiments>
</comment>
<comment type="interaction">
    <interactant intactId="EBI-7850136">
        <id>Q9Y548</id>
    </interactant>
    <interactant intactId="EBI-2339374">
        <id>Q8TAZ6</id>
        <label>CMTM2</label>
    </interactant>
    <organismsDiffer>false</organismsDiffer>
    <experiments>3</experiments>
</comment>
<comment type="interaction">
    <interactant intactId="EBI-7850136">
        <id>Q9Y548</id>
    </interactant>
    <interactant intactId="EBI-2835940">
        <id>P34972</id>
        <label>CNR2</label>
    </interactant>
    <organismsDiffer>false</organismsDiffer>
    <experiments>3</experiments>
</comment>
<comment type="interaction">
    <interactant intactId="EBI-7850136">
        <id>Q9Y548</id>
    </interactant>
    <interactant intactId="EBI-3915253">
        <id>Q15125</id>
        <label>EBP</label>
    </interactant>
    <organismsDiffer>false</organismsDiffer>
    <experiments>3</experiments>
</comment>
<comment type="interaction">
    <interactant intactId="EBI-7850136">
        <id>Q9Y548</id>
    </interactant>
    <interactant intactId="EBI-781551">
        <id>Q9Y282</id>
        <label>ERGIC3</label>
    </interactant>
    <organismsDiffer>false</organismsDiffer>
    <experiments>3</experiments>
</comment>
<comment type="interaction">
    <interactant intactId="EBI-7850136">
        <id>Q9Y548</id>
    </interactant>
    <interactant intactId="EBI-17762181">
        <id>O14843</id>
        <label>FFAR3</label>
    </interactant>
    <organismsDiffer>false</organismsDiffer>
    <experiments>3</experiments>
</comment>
<comment type="interaction">
    <interactant intactId="EBI-7850136">
        <id>Q9Y548</id>
    </interactant>
    <interactant intactId="EBI-13345167">
        <id>Q8TDT2</id>
        <label>GPR152</label>
    </interactant>
    <organismsDiffer>false</organismsDiffer>
    <experiments>3</experiments>
</comment>
<comment type="interaction">
    <interactant intactId="EBI-7850136">
        <id>Q9Y548</id>
    </interactant>
    <interactant intactId="EBI-18076404">
        <id>O15529</id>
        <label>GPR42</label>
    </interactant>
    <organismsDiffer>false</organismsDiffer>
    <experiments>3</experiments>
</comment>
<comment type="interaction">
    <interactant intactId="EBI-7850136">
        <id>Q9Y548</id>
    </interactant>
    <interactant intactId="EBI-13067820">
        <id>Q9NZD1</id>
        <label>GPRC5D</label>
    </interactant>
    <organismsDiffer>false</organismsDiffer>
    <experiments>3</experiments>
</comment>
<comment type="interaction">
    <interactant intactId="EBI-7850136">
        <id>Q9Y548</id>
    </interactant>
    <interactant intactId="EBI-1055254">
        <id>Q8WXH2</id>
        <label>JPH3</label>
    </interactant>
    <organismsDiffer>false</organismsDiffer>
    <experiments>3</experiments>
</comment>
<comment type="interaction">
    <interactant intactId="EBI-7850136">
        <id>Q9Y548</id>
    </interactant>
    <interactant intactId="EBI-12017638">
        <id>P48051</id>
        <label>KCNJ6</label>
    </interactant>
    <organismsDiffer>false</organismsDiffer>
    <experiments>3</experiments>
</comment>
<comment type="interaction">
    <interactant intactId="EBI-7850136">
        <id>Q9Y548</id>
    </interactant>
    <interactant intactId="EBI-15672507">
        <id>O15243</id>
        <label>LEPROT</label>
    </interactant>
    <organismsDiffer>false</organismsDiffer>
    <experiments>3</experiments>
</comment>
<comment type="interaction">
    <interactant intactId="EBI-7850136">
        <id>Q9Y548</id>
    </interactant>
    <interactant intactId="EBI-373355">
        <id>Q5SR56</id>
        <label>MFSD14B</label>
    </interactant>
    <organismsDiffer>false</organismsDiffer>
    <experiments>3</experiments>
</comment>
<comment type="interaction">
    <interactant intactId="EBI-7850136">
        <id>Q9Y548</id>
    </interactant>
    <interactant intactId="EBI-10192441">
        <id>Q86VR2</id>
        <label>RETREG3</label>
    </interactant>
    <organismsDiffer>false</organismsDiffer>
    <experiments>3</experiments>
</comment>
<comment type="interaction">
    <interactant intactId="EBI-7850136">
        <id>Q9Y548</id>
    </interactant>
    <interactant intactId="EBI-348482">
        <id>Q99942</id>
        <label>RNF5</label>
    </interactant>
    <organismsDiffer>false</organismsDiffer>
    <experiments>3</experiments>
</comment>
<comment type="interaction">
    <interactant intactId="EBI-7850136">
        <id>Q9Y548</id>
    </interactant>
    <interactant intactId="EBI-17640454">
        <id>Q96PQ1</id>
        <label>SIGLEC12</label>
    </interactant>
    <organismsDiffer>false</organismsDiffer>
    <experiments>3</experiments>
</comment>
<comment type="interaction">
    <interactant intactId="EBI-7850136">
        <id>Q9Y548</id>
    </interactant>
    <interactant intactId="EBI-18159983">
        <id>Q3KNW5</id>
        <label>SLC10A6</label>
    </interactant>
    <organismsDiffer>false</organismsDiffer>
    <experiments>3</experiments>
</comment>
<comment type="interaction">
    <interactant intactId="EBI-7850136">
        <id>Q9Y548</id>
    </interactant>
    <interactant intactId="EBI-13311257">
        <id>Q2M3R5</id>
        <label>SLC35G1</label>
    </interactant>
    <organismsDiffer>false</organismsDiffer>
    <experiments>3</experiments>
</comment>
<comment type="interaction">
    <interactant intactId="EBI-7850136">
        <id>Q9Y548</id>
    </interactant>
    <interactant intactId="EBI-13292283">
        <id>Q9UHI5</id>
        <label>SLC7A8</label>
    </interactant>
    <organismsDiffer>false</organismsDiffer>
    <experiments>3</experiments>
</comment>
<comment type="interaction">
    <interactant intactId="EBI-7850136">
        <id>Q9Y548</id>
    </interactant>
    <interactant intactId="EBI-6268651">
        <id>Q9NPL8</id>
        <label>TIMMDC1</label>
    </interactant>
    <organismsDiffer>false</organismsDiffer>
    <experiments>3</experiments>
</comment>
<comment type="interaction">
    <interactant intactId="EBI-7850136">
        <id>Q9Y548</id>
    </interactant>
    <interactant intactId="EBI-12947623">
        <id>Q96MV1</id>
        <label>TLCD4</label>
    </interactant>
    <organismsDiffer>false</organismsDiffer>
    <experiments>3</experiments>
</comment>
<comment type="interaction">
    <interactant intactId="EBI-7850136">
        <id>Q9Y548</id>
    </interactant>
    <interactant intactId="EBI-8638294">
        <id>Q9NUH8</id>
        <label>TMEM14B</label>
    </interactant>
    <organismsDiffer>false</organismsDiffer>
    <experiments>3</experiments>
</comment>
<comment type="interaction">
    <interactant intactId="EBI-7850136">
        <id>Q9Y548</id>
    </interactant>
    <interactant intactId="EBI-10314986">
        <id>Q9NWD8</id>
        <label>TMEM248</label>
    </interactant>
    <organismsDiffer>false</organismsDiffer>
    <experiments>3</experiments>
</comment>
<comment type="interaction">
    <interactant intactId="EBI-7850136">
        <id>Q9Y548</id>
    </interactant>
    <interactant intactId="EBI-11724433">
        <id>Q6ZT21</id>
        <label>TMPPE</label>
    </interactant>
    <organismsDiffer>false</organismsDiffer>
    <experiments>3</experiments>
</comment>
<comment type="interaction">
    <interactant intactId="EBI-7850136">
        <id>Q9Y548</id>
    </interactant>
    <interactant intactId="EBI-6447886">
        <id>Q9Y320</id>
        <label>TMX2</label>
    </interactant>
    <organismsDiffer>false</organismsDiffer>
    <experiments>3</experiments>
</comment>
<comment type="interaction">
    <interactant intactId="EBI-7850136">
        <id>Q9Y548</id>
    </interactant>
    <interactant intactId="EBI-11343401">
        <id>Q9NYZ1</id>
        <label>TVP23B</label>
    </interactant>
    <organismsDiffer>false</organismsDiffer>
    <experiments>3</experiments>
</comment>
<comment type="interaction">
    <interactant intactId="EBI-7850136">
        <id>Q9Y548</id>
    </interactant>
    <interactant intactId="EBI-1055364">
        <id>Q3ZAQ7</id>
        <label>VMA21</label>
    </interactant>
    <organismsDiffer>false</organismsDiffer>
    <experiments>3</experiments>
</comment>
<comment type="interaction">
    <interactant intactId="EBI-7850136">
        <id>Q9Y548</id>
    </interactant>
    <interactant intactId="EBI-751210">
        <id>Q96EC8</id>
        <label>YIPF6</label>
    </interactant>
    <organismsDiffer>false</organismsDiffer>
    <experiments>10</experiments>
</comment>
<comment type="interaction">
    <interactant intactId="EBI-7850136">
        <id>Q9Y548</id>
    </interactant>
    <interactant intactId="EBI-12948063">
        <id>Q9NXF8-2</id>
        <label>ZDHHC7</label>
    </interactant>
    <organismsDiffer>false</organismsDiffer>
    <experiments>3</experiments>
</comment>
<comment type="subcellular location">
    <subcellularLocation>
        <location evidence="3">Golgi apparatus</location>
        <location evidence="3">cis-Golgi network membrane</location>
        <topology evidence="6">Multi-pass membrane protein</topology>
    </subcellularLocation>
    <subcellularLocation>
        <location evidence="3 4">Golgi apparatus</location>
        <location evidence="3 4">trans-Golgi network membrane</location>
    </subcellularLocation>
    <subcellularLocation>
        <location evidence="3">Late endosome membrane</location>
    </subcellularLocation>
    <text evidence="3 4">Mainly localizes within medial-/trans-Golgi and trans-Golgi network (TGN), while less so within cis-Golgi.</text>
</comment>
<comment type="alternative products">
    <event type="alternative splicing"/>
    <isoform>
        <id>Q9Y548-1</id>
        <name>1</name>
        <sequence type="displayed"/>
    </isoform>
    <isoform>
        <id>Q9Y548-2</id>
        <name>2</name>
        <sequence type="described" ref="VSP_019437"/>
    </isoform>
</comment>
<comment type="similarity">
    <text evidence="6">Belongs to the YIP1 family.</text>
</comment>
<comment type="sequence caution" evidence="6">
    <conflict type="erroneous initiation">
        <sequence resource="EMBL-CDS" id="AAH09674"/>
    </conflict>
    <text>Truncated N-terminus.</text>
</comment>
<dbReference type="EMBL" id="AK000823">
    <property type="protein sequence ID" value="BAA91389.1"/>
    <property type="molecule type" value="mRNA"/>
</dbReference>
<dbReference type="EMBL" id="AK315183">
    <property type="protein sequence ID" value="BAG37624.1"/>
    <property type="molecule type" value="mRNA"/>
</dbReference>
<dbReference type="EMBL" id="AL713668">
    <property type="protein sequence ID" value="CAD28474.1"/>
    <property type="molecule type" value="mRNA"/>
</dbReference>
<dbReference type="EMBL" id="CH471059">
    <property type="protein sequence ID" value="EAX06727.1"/>
    <property type="molecule type" value="Genomic_DNA"/>
</dbReference>
<dbReference type="EMBL" id="CH471059">
    <property type="protein sequence ID" value="EAX06728.1"/>
    <property type="molecule type" value="Genomic_DNA"/>
</dbReference>
<dbReference type="EMBL" id="CH471059">
    <property type="protein sequence ID" value="EAX06729.1"/>
    <property type="molecule type" value="Genomic_DNA"/>
</dbReference>
<dbReference type="EMBL" id="BC009674">
    <property type="protein sequence ID" value="AAH09674.1"/>
    <property type="status" value="ALT_INIT"/>
    <property type="molecule type" value="mRNA"/>
</dbReference>
<dbReference type="EMBL" id="BC064590">
    <property type="protein sequence ID" value="AAH64590.1"/>
    <property type="molecule type" value="mRNA"/>
</dbReference>
<dbReference type="CCDS" id="CCDS584.1">
    <molecule id="Q9Y548-1"/>
</dbReference>
<dbReference type="RefSeq" id="NP_061855.1">
    <molecule id="Q9Y548-1"/>
    <property type="nucleotide sequence ID" value="NM_018982.5"/>
</dbReference>
<dbReference type="RefSeq" id="XP_016856988.1">
    <property type="nucleotide sequence ID" value="XM_017001499.1"/>
</dbReference>
<dbReference type="SMR" id="Q9Y548"/>
<dbReference type="BioGRID" id="119948">
    <property type="interactions" value="43"/>
</dbReference>
<dbReference type="FunCoup" id="Q9Y548">
    <property type="interactions" value="1768"/>
</dbReference>
<dbReference type="IntAct" id="Q9Y548">
    <property type="interactions" value="38"/>
</dbReference>
<dbReference type="MINT" id="Q9Y548"/>
<dbReference type="STRING" id="9606.ENSP00000072644"/>
<dbReference type="TCDB" id="9.B.135.2.3">
    <property type="family name" value="the membrane trafficking yip (yip) family"/>
</dbReference>
<dbReference type="GlyCosmos" id="Q9Y548">
    <property type="glycosylation" value="1 site, No reported glycans"/>
</dbReference>
<dbReference type="GlyGen" id="Q9Y548">
    <property type="glycosylation" value="1 site"/>
</dbReference>
<dbReference type="iPTMnet" id="Q9Y548"/>
<dbReference type="PhosphoSitePlus" id="Q9Y548"/>
<dbReference type="BioMuta" id="YIPF1"/>
<dbReference type="DMDM" id="74735280"/>
<dbReference type="jPOST" id="Q9Y548"/>
<dbReference type="MassIVE" id="Q9Y548"/>
<dbReference type="PaxDb" id="9606-ENSP00000072644"/>
<dbReference type="PeptideAtlas" id="Q9Y548"/>
<dbReference type="ProteomicsDB" id="86289">
    <molecule id="Q9Y548-1"/>
</dbReference>
<dbReference type="Pumba" id="Q9Y548"/>
<dbReference type="Antibodypedia" id="3081">
    <property type="antibodies" value="91 antibodies from 18 providers"/>
</dbReference>
<dbReference type="DNASU" id="54432"/>
<dbReference type="Ensembl" id="ENST00000072644.7">
    <molecule id="Q9Y548-1"/>
    <property type="protein sequence ID" value="ENSP00000072644.1"/>
    <property type="gene ID" value="ENSG00000058799.15"/>
</dbReference>
<dbReference type="Ensembl" id="ENST00000371399.5">
    <molecule id="Q9Y548-2"/>
    <property type="protein sequence ID" value="ENSP00000360452.1"/>
    <property type="gene ID" value="ENSG00000058799.15"/>
</dbReference>
<dbReference type="Ensembl" id="ENST00000464950.6">
    <molecule id="Q9Y548-1"/>
    <property type="protein sequence ID" value="ENSP00000432266.1"/>
    <property type="gene ID" value="ENSG00000058799.15"/>
</dbReference>
<dbReference type="GeneID" id="54432"/>
<dbReference type="KEGG" id="hsa:54432"/>
<dbReference type="MANE-Select" id="ENST00000072644.7">
    <property type="protein sequence ID" value="ENSP00000072644.1"/>
    <property type="RefSeq nucleotide sequence ID" value="NM_018982.5"/>
    <property type="RefSeq protein sequence ID" value="NP_061855.1"/>
</dbReference>
<dbReference type="UCSC" id="uc001cvu.4">
    <molecule id="Q9Y548-1"/>
    <property type="organism name" value="human"/>
</dbReference>
<dbReference type="AGR" id="HGNC:25231"/>
<dbReference type="CTD" id="54432"/>
<dbReference type="DisGeNET" id="54432"/>
<dbReference type="GeneCards" id="YIPF1"/>
<dbReference type="HGNC" id="HGNC:25231">
    <property type="gene designation" value="YIPF1"/>
</dbReference>
<dbReference type="HPA" id="ENSG00000058799">
    <property type="expression patterns" value="Low tissue specificity"/>
</dbReference>
<dbReference type="MIM" id="617521">
    <property type="type" value="gene"/>
</dbReference>
<dbReference type="neXtProt" id="NX_Q9Y548"/>
<dbReference type="OpenTargets" id="ENSG00000058799"/>
<dbReference type="PharmGKB" id="PA142670555"/>
<dbReference type="VEuPathDB" id="HostDB:ENSG00000058799"/>
<dbReference type="eggNOG" id="KOG3114">
    <property type="taxonomic scope" value="Eukaryota"/>
</dbReference>
<dbReference type="GeneTree" id="ENSGT00390000010157"/>
<dbReference type="HOGENOM" id="CLU_059606_1_0_1"/>
<dbReference type="InParanoid" id="Q9Y548"/>
<dbReference type="OMA" id="VFRRCVA"/>
<dbReference type="OrthoDB" id="10256463at2759"/>
<dbReference type="PAN-GO" id="Q9Y548">
    <property type="GO annotations" value="1 GO annotation based on evolutionary models"/>
</dbReference>
<dbReference type="PhylomeDB" id="Q9Y548"/>
<dbReference type="TreeFam" id="TF313536"/>
<dbReference type="PathwayCommons" id="Q9Y548"/>
<dbReference type="SignaLink" id="Q9Y548"/>
<dbReference type="BioGRID-ORCS" id="54432">
    <property type="hits" value="8 hits in 1154 CRISPR screens"/>
</dbReference>
<dbReference type="ChiTaRS" id="YIPF1">
    <property type="organism name" value="human"/>
</dbReference>
<dbReference type="GeneWiki" id="YIPF1"/>
<dbReference type="GenomeRNAi" id="54432"/>
<dbReference type="Pharos" id="Q9Y548">
    <property type="development level" value="Tbio"/>
</dbReference>
<dbReference type="PRO" id="PR:Q9Y548"/>
<dbReference type="Proteomes" id="UP000005640">
    <property type="component" value="Chromosome 1"/>
</dbReference>
<dbReference type="RNAct" id="Q9Y548">
    <property type="molecule type" value="protein"/>
</dbReference>
<dbReference type="Bgee" id="ENSG00000058799">
    <property type="expression patterns" value="Expressed in islet of Langerhans and 199 other cell types or tissues"/>
</dbReference>
<dbReference type="GO" id="GO:0005794">
    <property type="term" value="C:Golgi apparatus"/>
    <property type="evidence" value="ECO:0000314"/>
    <property type="project" value="HPA"/>
</dbReference>
<dbReference type="GO" id="GO:0005797">
    <property type="term" value="C:Golgi medial cisterna"/>
    <property type="evidence" value="ECO:0000314"/>
    <property type="project" value="UniProtKB"/>
</dbReference>
<dbReference type="GO" id="GO:0000138">
    <property type="term" value="C:Golgi trans cisterna"/>
    <property type="evidence" value="ECO:0000314"/>
    <property type="project" value="UniProtKB"/>
</dbReference>
<dbReference type="GO" id="GO:0031902">
    <property type="term" value="C:late endosome membrane"/>
    <property type="evidence" value="ECO:0007669"/>
    <property type="project" value="UniProtKB-SubCell"/>
</dbReference>
<dbReference type="GO" id="GO:0005654">
    <property type="term" value="C:nucleoplasm"/>
    <property type="evidence" value="ECO:0000314"/>
    <property type="project" value="HPA"/>
</dbReference>
<dbReference type="GO" id="GO:0005886">
    <property type="term" value="C:plasma membrane"/>
    <property type="evidence" value="ECO:0000314"/>
    <property type="project" value="HPA"/>
</dbReference>
<dbReference type="GO" id="GO:0005802">
    <property type="term" value="C:trans-Golgi network"/>
    <property type="evidence" value="ECO:0000314"/>
    <property type="project" value="UniProtKB"/>
</dbReference>
<dbReference type="GO" id="GO:0030133">
    <property type="term" value="C:transport vesicle"/>
    <property type="evidence" value="ECO:0000314"/>
    <property type="project" value="LIFEdb"/>
</dbReference>
<dbReference type="GO" id="GO:0031267">
    <property type="term" value="F:small GTPase binding"/>
    <property type="evidence" value="ECO:0007669"/>
    <property type="project" value="InterPro"/>
</dbReference>
<dbReference type="GO" id="GO:0016192">
    <property type="term" value="P:vesicle-mediated transport"/>
    <property type="evidence" value="ECO:0007669"/>
    <property type="project" value="InterPro"/>
</dbReference>
<dbReference type="InterPro" id="IPR006977">
    <property type="entry name" value="Yip1_dom"/>
</dbReference>
<dbReference type="InterPro" id="IPR039765">
    <property type="entry name" value="Yip5/YIPF1/YIPF2"/>
</dbReference>
<dbReference type="PANTHER" id="PTHR12822">
    <property type="entry name" value="PROTEIN YIPF"/>
    <property type="match status" value="1"/>
</dbReference>
<dbReference type="PANTHER" id="PTHR12822:SF4">
    <property type="entry name" value="PROTEIN YIPF1"/>
    <property type="match status" value="1"/>
</dbReference>
<dbReference type="Pfam" id="PF04893">
    <property type="entry name" value="Yip1"/>
    <property type="match status" value="1"/>
</dbReference>
<keyword id="KW-0025">Alternative splicing</keyword>
<keyword id="KW-0967">Endosome</keyword>
<keyword id="KW-0325">Glycoprotein</keyword>
<keyword id="KW-0333">Golgi apparatus</keyword>
<keyword id="KW-0472">Membrane</keyword>
<keyword id="KW-1267">Proteomics identification</keyword>
<keyword id="KW-1185">Reference proteome</keyword>
<keyword id="KW-0812">Transmembrane</keyword>
<keyword id="KW-1133">Transmembrane helix</keyword>
<proteinExistence type="evidence at protein level"/>
<feature type="chain" id="PRO_0000240868" description="Protein YIPF1">
    <location>
        <begin position="1"/>
        <end position="306"/>
    </location>
</feature>
<feature type="topological domain" description="Cytoplasmic" evidence="7">
    <location>
        <begin position="1"/>
        <end position="119"/>
    </location>
</feature>
<feature type="transmembrane region" description="Helical" evidence="1">
    <location>
        <begin position="120"/>
        <end position="140"/>
    </location>
</feature>
<feature type="topological domain" description="Lumenal" evidence="3">
    <location>
        <begin position="141"/>
        <end position="162"/>
    </location>
</feature>
<feature type="transmembrane region" description="Helical" evidence="1">
    <location>
        <begin position="163"/>
        <end position="183"/>
    </location>
</feature>
<feature type="topological domain" description="Cytoplasmic" evidence="3">
    <location>
        <begin position="184"/>
        <end position="200"/>
    </location>
</feature>
<feature type="transmembrane region" description="Helical" evidence="1">
    <location>
        <begin position="201"/>
        <end position="221"/>
    </location>
</feature>
<feature type="topological domain" description="Lumenal" evidence="3">
    <location>
        <begin position="222"/>
        <end position="227"/>
    </location>
</feature>
<feature type="transmembrane region" description="Helical" evidence="1">
    <location>
        <begin position="228"/>
        <end position="248"/>
    </location>
</feature>
<feature type="topological domain" description="Cytoplasmic" evidence="3">
    <location>
        <begin position="249"/>
        <end position="256"/>
    </location>
</feature>
<feature type="transmembrane region" description="Helical" evidence="1">
    <location>
        <begin position="257"/>
        <end position="277"/>
    </location>
</feature>
<feature type="topological domain" description="Lumenal" evidence="7">
    <location>
        <begin position="278"/>
        <end position="306"/>
    </location>
</feature>
<feature type="region of interest" description="Disordered" evidence="2">
    <location>
        <begin position="14"/>
        <end position="62"/>
    </location>
</feature>
<feature type="compositionally biased region" description="Polar residues" evidence="2">
    <location>
        <begin position="15"/>
        <end position="29"/>
    </location>
</feature>
<feature type="compositionally biased region" description="Acidic residues" evidence="2">
    <location>
        <begin position="50"/>
        <end position="59"/>
    </location>
</feature>
<feature type="glycosylation site" description="N-linked (GlcNAc...) asparagine" evidence="1">
    <location>
        <position position="297"/>
    </location>
</feature>
<feature type="splice variant" id="VSP_019437" description="In isoform 2." evidence="5">
    <location>
        <begin position="1"/>
        <end position="183"/>
    </location>
</feature>
<feature type="sequence conflict" description="In Ref. 4; AAH09674." evidence="6" ref="4">
    <original>F</original>
    <variation>L</variation>
    <location>
        <position position="109"/>
    </location>
</feature>
<gene>
    <name type="primary">YIPF1</name>
</gene>
<reference key="1">
    <citation type="journal article" date="2004" name="Nat. Genet.">
        <title>Complete sequencing and characterization of 21,243 full-length human cDNAs.</title>
        <authorList>
            <person name="Ota T."/>
            <person name="Suzuki Y."/>
            <person name="Nishikawa T."/>
            <person name="Otsuki T."/>
            <person name="Sugiyama T."/>
            <person name="Irie R."/>
            <person name="Wakamatsu A."/>
            <person name="Hayashi K."/>
            <person name="Sato H."/>
            <person name="Nagai K."/>
            <person name="Kimura K."/>
            <person name="Makita H."/>
            <person name="Sekine M."/>
            <person name="Obayashi M."/>
            <person name="Nishi T."/>
            <person name="Shibahara T."/>
            <person name="Tanaka T."/>
            <person name="Ishii S."/>
            <person name="Yamamoto J."/>
            <person name="Saito K."/>
            <person name="Kawai Y."/>
            <person name="Isono Y."/>
            <person name="Nakamura Y."/>
            <person name="Nagahari K."/>
            <person name="Murakami K."/>
            <person name="Yasuda T."/>
            <person name="Iwayanagi T."/>
            <person name="Wagatsuma M."/>
            <person name="Shiratori A."/>
            <person name="Sudo H."/>
            <person name="Hosoiri T."/>
            <person name="Kaku Y."/>
            <person name="Kodaira H."/>
            <person name="Kondo H."/>
            <person name="Sugawara M."/>
            <person name="Takahashi M."/>
            <person name="Kanda K."/>
            <person name="Yokoi T."/>
            <person name="Furuya T."/>
            <person name="Kikkawa E."/>
            <person name="Omura Y."/>
            <person name="Abe K."/>
            <person name="Kamihara K."/>
            <person name="Katsuta N."/>
            <person name="Sato K."/>
            <person name="Tanikawa M."/>
            <person name="Yamazaki M."/>
            <person name="Ninomiya K."/>
            <person name="Ishibashi T."/>
            <person name="Yamashita H."/>
            <person name="Murakawa K."/>
            <person name="Fujimori K."/>
            <person name="Tanai H."/>
            <person name="Kimata M."/>
            <person name="Watanabe M."/>
            <person name="Hiraoka S."/>
            <person name="Chiba Y."/>
            <person name="Ishida S."/>
            <person name="Ono Y."/>
            <person name="Takiguchi S."/>
            <person name="Watanabe S."/>
            <person name="Yosida M."/>
            <person name="Hotuta T."/>
            <person name="Kusano J."/>
            <person name="Kanehori K."/>
            <person name="Takahashi-Fujii A."/>
            <person name="Hara H."/>
            <person name="Tanase T.-O."/>
            <person name="Nomura Y."/>
            <person name="Togiya S."/>
            <person name="Komai F."/>
            <person name="Hara R."/>
            <person name="Takeuchi K."/>
            <person name="Arita M."/>
            <person name="Imose N."/>
            <person name="Musashino K."/>
            <person name="Yuuki H."/>
            <person name="Oshima A."/>
            <person name="Sasaki N."/>
            <person name="Aotsuka S."/>
            <person name="Yoshikawa Y."/>
            <person name="Matsunawa H."/>
            <person name="Ichihara T."/>
            <person name="Shiohata N."/>
            <person name="Sano S."/>
            <person name="Moriya S."/>
            <person name="Momiyama H."/>
            <person name="Satoh N."/>
            <person name="Takami S."/>
            <person name="Terashima Y."/>
            <person name="Suzuki O."/>
            <person name="Nakagawa S."/>
            <person name="Senoh A."/>
            <person name="Mizoguchi H."/>
            <person name="Goto Y."/>
            <person name="Shimizu F."/>
            <person name="Wakebe H."/>
            <person name="Hishigaki H."/>
            <person name="Watanabe T."/>
            <person name="Sugiyama A."/>
            <person name="Takemoto M."/>
            <person name="Kawakami B."/>
            <person name="Yamazaki M."/>
            <person name="Watanabe K."/>
            <person name="Kumagai A."/>
            <person name="Itakura S."/>
            <person name="Fukuzumi Y."/>
            <person name="Fujimori Y."/>
            <person name="Komiyama M."/>
            <person name="Tashiro H."/>
            <person name="Tanigami A."/>
            <person name="Fujiwara T."/>
            <person name="Ono T."/>
            <person name="Yamada K."/>
            <person name="Fujii Y."/>
            <person name="Ozaki K."/>
            <person name="Hirao M."/>
            <person name="Ohmori Y."/>
            <person name="Kawabata A."/>
            <person name="Hikiji T."/>
            <person name="Kobatake N."/>
            <person name="Inagaki H."/>
            <person name="Ikema Y."/>
            <person name="Okamoto S."/>
            <person name="Okitani R."/>
            <person name="Kawakami T."/>
            <person name="Noguchi S."/>
            <person name="Itoh T."/>
            <person name="Shigeta K."/>
            <person name="Senba T."/>
            <person name="Matsumura K."/>
            <person name="Nakajima Y."/>
            <person name="Mizuno T."/>
            <person name="Morinaga M."/>
            <person name="Sasaki M."/>
            <person name="Togashi T."/>
            <person name="Oyama M."/>
            <person name="Hata H."/>
            <person name="Watanabe M."/>
            <person name="Komatsu T."/>
            <person name="Mizushima-Sugano J."/>
            <person name="Satoh T."/>
            <person name="Shirai Y."/>
            <person name="Takahashi Y."/>
            <person name="Nakagawa K."/>
            <person name="Okumura K."/>
            <person name="Nagase T."/>
            <person name="Nomura N."/>
            <person name="Kikuchi H."/>
            <person name="Masuho Y."/>
            <person name="Yamashita R."/>
            <person name="Nakai K."/>
            <person name="Yada T."/>
            <person name="Nakamura Y."/>
            <person name="Ohara O."/>
            <person name="Isogai T."/>
            <person name="Sugano S."/>
        </authorList>
    </citation>
    <scope>NUCLEOTIDE SEQUENCE [LARGE SCALE MRNA] (ISOFORMS 1 AND 2)</scope>
    <source>
        <tissue>Adipose tissue</tissue>
        <tissue>Synovium</tissue>
    </source>
</reference>
<reference key="2">
    <citation type="journal article" date="2007" name="BMC Genomics">
        <title>The full-ORF clone resource of the German cDNA consortium.</title>
        <authorList>
            <person name="Bechtel S."/>
            <person name="Rosenfelder H."/>
            <person name="Duda A."/>
            <person name="Schmidt C.P."/>
            <person name="Ernst U."/>
            <person name="Wellenreuther R."/>
            <person name="Mehrle A."/>
            <person name="Schuster C."/>
            <person name="Bahr A."/>
            <person name="Bloecker H."/>
            <person name="Heubner D."/>
            <person name="Hoerlein A."/>
            <person name="Michel G."/>
            <person name="Wedler H."/>
            <person name="Koehrer K."/>
            <person name="Ottenwaelder B."/>
            <person name="Poustka A."/>
            <person name="Wiemann S."/>
            <person name="Schupp I."/>
        </authorList>
    </citation>
    <scope>NUCLEOTIDE SEQUENCE [LARGE SCALE MRNA] (ISOFORM 1)</scope>
    <source>
        <tissue>Amygdala</tissue>
    </source>
</reference>
<reference key="3">
    <citation type="submission" date="2005-09" db="EMBL/GenBank/DDBJ databases">
        <authorList>
            <person name="Mural R.J."/>
            <person name="Istrail S."/>
            <person name="Sutton G.G."/>
            <person name="Florea L."/>
            <person name="Halpern A.L."/>
            <person name="Mobarry C.M."/>
            <person name="Lippert R."/>
            <person name="Walenz B."/>
            <person name="Shatkay H."/>
            <person name="Dew I."/>
            <person name="Miller J.R."/>
            <person name="Flanigan M.J."/>
            <person name="Edwards N.J."/>
            <person name="Bolanos R."/>
            <person name="Fasulo D."/>
            <person name="Halldorsson B.V."/>
            <person name="Hannenhalli S."/>
            <person name="Turner R."/>
            <person name="Yooseph S."/>
            <person name="Lu F."/>
            <person name="Nusskern D.R."/>
            <person name="Shue B.C."/>
            <person name="Zheng X.H."/>
            <person name="Zhong F."/>
            <person name="Delcher A.L."/>
            <person name="Huson D.H."/>
            <person name="Kravitz S.A."/>
            <person name="Mouchard L."/>
            <person name="Reinert K."/>
            <person name="Remington K.A."/>
            <person name="Clark A.G."/>
            <person name="Waterman M.S."/>
            <person name="Eichler E.E."/>
            <person name="Adams M.D."/>
            <person name="Hunkapiller M.W."/>
            <person name="Myers E.W."/>
            <person name="Venter J.C."/>
        </authorList>
    </citation>
    <scope>NUCLEOTIDE SEQUENCE [LARGE SCALE GENOMIC DNA]</scope>
</reference>
<reference key="4">
    <citation type="journal article" date="2004" name="Genome Res.">
        <title>The status, quality, and expansion of the NIH full-length cDNA project: the Mammalian Gene Collection (MGC).</title>
        <authorList>
            <consortium name="The MGC Project Team"/>
        </authorList>
    </citation>
    <scope>NUCLEOTIDE SEQUENCE [LARGE SCALE MRNA] (ISOFORM 1)</scope>
    <source>
        <tissue>Lung</tissue>
        <tissue>Pancreas</tissue>
    </source>
</reference>
<reference key="5">
    <citation type="journal article" date="2017" name="Exp. Cell Res.">
        <title>YIPF1, YIPF2, and YIPF6 are medial-/trans-Golgi and trans-Golgi network-localized Yip domain family proteins, which play a role in the Golgi reassembly and glycan synthesis.</title>
        <authorList>
            <person name="Soonthornsit J."/>
            <person name="Sakai N."/>
            <person name="Sasaki Y."/>
            <person name="Watanabe R."/>
            <person name="Osako S."/>
            <person name="Nakamura N."/>
        </authorList>
    </citation>
    <scope>SUBCELLULAR LOCATION</scope>
    <scope>INTERACTION WITH YIPF2 AND YIPF6</scope>
</reference>
<reference key="6">
    <citation type="journal article" date="2017" name="Histochem. Cell Biol.">
        <title>Functional characterisation of the YIPF protein family in mammalian cells.</title>
        <authorList>
            <person name="Kranjc T."/>
            <person name="Dempsey E."/>
            <person name="Cagney G."/>
            <person name="Nakamura N."/>
            <person name="Shields D.C."/>
            <person name="Simpson J.C."/>
        </authorList>
    </citation>
    <scope>SUBCELLULAR LOCATION</scope>
    <scope>TOPOLOGY</scope>
</reference>
<organism>
    <name type="scientific">Homo sapiens</name>
    <name type="common">Human</name>
    <dbReference type="NCBI Taxonomy" id="9606"/>
    <lineage>
        <taxon>Eukaryota</taxon>
        <taxon>Metazoa</taxon>
        <taxon>Chordata</taxon>
        <taxon>Craniata</taxon>
        <taxon>Vertebrata</taxon>
        <taxon>Euteleostomi</taxon>
        <taxon>Mammalia</taxon>
        <taxon>Eutheria</taxon>
        <taxon>Euarchontoglires</taxon>
        <taxon>Primates</taxon>
        <taxon>Haplorrhini</taxon>
        <taxon>Catarrhini</taxon>
        <taxon>Hominidae</taxon>
        <taxon>Homo</taxon>
    </lineage>
</organism>
<sequence>MAAVDDLQFEEFGNAATSLTANPDATTVNIEDPGETPKHQPGSPRGSGREEDDELLGNDDSDKTELLAGQKKSSPFWTFEYYQTFFDVDTYQVFDRIKGSLLPIPGKNFVRLYIRSNPDLYGPFWICATLVFAIAISGNLSNFLIHLGEKTYHYVPEFRKVSIAATIIYAYAWLVPLALWGFLMWRNSKVMNIVSYSFLEIVCVYGYSLFIYIPTAILWIIPQKAVRWILVMIALGISGSLLAMTFWPAVREDNRRVALATIVTIVLLHMLLSVGCLAYFFDAPEMDHLPTTTATPNQTVAAAKSS</sequence>